<evidence type="ECO:0000255" key="1"/>
<evidence type="ECO:0000256" key="2">
    <source>
        <dbReference type="SAM" id="MobiDB-lite"/>
    </source>
</evidence>
<evidence type="ECO:0000305" key="3"/>
<reference key="1">
    <citation type="journal article" date="1990" name="J. Cell Biol.">
        <title>Import of ADP/ATP carrier into mitochondria: two receptors act in parallel.</title>
        <authorList>
            <person name="Steger H.F."/>
            <person name="Soellner T."/>
            <person name="Kiebler M."/>
            <person name="Dietmeier K.A."/>
            <person name="Pfaller R."/>
            <person name="Truelzsch K.S."/>
            <person name="Tropschug M."/>
            <person name="Neupert W."/>
            <person name="Pfanner N."/>
        </authorList>
    </citation>
    <scope>NUCLEOTIDE SEQUENCE [MRNA]</scope>
    <source>
        <strain>ATCC 24698 / 74-OR23-1A / CBS 708.71 / DSM 1257 / FGSC 987</strain>
    </source>
</reference>
<reference key="2">
    <citation type="journal article" date="1999" name="Curr. Genet.">
        <title>Inactivation of the Neurospora crassa mitochondrial outer membrane protein TOM70 by repeat-induced point mutation (RIP) causes defects in mitochondrial protein import and morphology.</title>
        <authorList>
            <person name="Grad L.I."/>
            <person name="Descheneau A.T."/>
            <person name="Neupert W."/>
            <person name="Lill R."/>
            <person name="Nargang F.E."/>
        </authorList>
    </citation>
    <scope>NUCLEOTIDE SEQUENCE [GENOMIC DNA]</scope>
    <source>
        <strain>NCN235</strain>
    </source>
</reference>
<reference key="3">
    <citation type="journal article" date="2003" name="Nucleic Acids Res.">
        <title>What's in the genome of a filamentous fungus? Analysis of the Neurospora genome sequence.</title>
        <authorList>
            <person name="Mannhaupt G."/>
            <person name="Montrone C."/>
            <person name="Haase D."/>
            <person name="Mewes H.-W."/>
            <person name="Aign V."/>
            <person name="Hoheisel J.D."/>
            <person name="Fartmann B."/>
            <person name="Nyakatura G."/>
            <person name="Kempken F."/>
            <person name="Maier J."/>
            <person name="Schulte U."/>
        </authorList>
    </citation>
    <scope>NUCLEOTIDE SEQUENCE [LARGE SCALE GENOMIC DNA]</scope>
    <source>
        <strain>ATCC 24698 / 74-OR23-1A / CBS 708.71 / DSM 1257 / FGSC 987</strain>
    </source>
</reference>
<reference key="4">
    <citation type="journal article" date="2003" name="Nature">
        <title>The genome sequence of the filamentous fungus Neurospora crassa.</title>
        <authorList>
            <person name="Galagan J.E."/>
            <person name="Calvo S.E."/>
            <person name="Borkovich K.A."/>
            <person name="Selker E.U."/>
            <person name="Read N.D."/>
            <person name="Jaffe D.B."/>
            <person name="FitzHugh W."/>
            <person name="Ma L.-J."/>
            <person name="Smirnov S."/>
            <person name="Purcell S."/>
            <person name="Rehman B."/>
            <person name="Elkins T."/>
            <person name="Engels R."/>
            <person name="Wang S."/>
            <person name="Nielsen C.B."/>
            <person name="Butler J."/>
            <person name="Endrizzi M."/>
            <person name="Qui D."/>
            <person name="Ianakiev P."/>
            <person name="Bell-Pedersen D."/>
            <person name="Nelson M.A."/>
            <person name="Werner-Washburne M."/>
            <person name="Selitrennikoff C.P."/>
            <person name="Kinsey J.A."/>
            <person name="Braun E.L."/>
            <person name="Zelter A."/>
            <person name="Schulte U."/>
            <person name="Kothe G.O."/>
            <person name="Jedd G."/>
            <person name="Mewes H.-W."/>
            <person name="Staben C."/>
            <person name="Marcotte E."/>
            <person name="Greenberg D."/>
            <person name="Roy A."/>
            <person name="Foley K."/>
            <person name="Naylor J."/>
            <person name="Stange-Thomann N."/>
            <person name="Barrett R."/>
            <person name="Gnerre S."/>
            <person name="Kamal M."/>
            <person name="Kamvysselis M."/>
            <person name="Mauceli E.W."/>
            <person name="Bielke C."/>
            <person name="Rudd S."/>
            <person name="Frishman D."/>
            <person name="Krystofova S."/>
            <person name="Rasmussen C."/>
            <person name="Metzenberg R.L."/>
            <person name="Perkins D.D."/>
            <person name="Kroken S."/>
            <person name="Cogoni C."/>
            <person name="Macino G."/>
            <person name="Catcheside D.E.A."/>
            <person name="Li W."/>
            <person name="Pratt R.J."/>
            <person name="Osmani S.A."/>
            <person name="DeSouza C.P.C."/>
            <person name="Glass N.L."/>
            <person name="Orbach M.J."/>
            <person name="Berglund J.A."/>
            <person name="Voelker R."/>
            <person name="Yarden O."/>
            <person name="Plamann M."/>
            <person name="Seiler S."/>
            <person name="Dunlap J.C."/>
            <person name="Radford A."/>
            <person name="Aramayo R."/>
            <person name="Natvig D.O."/>
            <person name="Alex L.A."/>
            <person name="Mannhaupt G."/>
            <person name="Ebbole D.J."/>
            <person name="Freitag M."/>
            <person name="Paulsen I."/>
            <person name="Sachs M.S."/>
            <person name="Lander E.S."/>
            <person name="Nusbaum C."/>
            <person name="Birren B.W."/>
        </authorList>
    </citation>
    <scope>NUCLEOTIDE SEQUENCE [LARGE SCALE GENOMIC DNA]</scope>
    <source>
        <strain>ATCC 24698 / 74-OR23-1A / CBS 708.71 / DSM 1257 / FGSC 987</strain>
    </source>
</reference>
<sequence>MAPTIPPPSVPIPAATPVTVPADSSIWDRVSNWVSEHKAVVYTIAGVSVVITTAGVVYYLRKGSEQKESGPKLSKKERRKRKQAEKGEAEKASTSKTEEAAPTQPKAAAVESADELPEIDEESVVRLSEDERKAYAAKLKELGNKAYGSKDFNKAIDLYSKAIICKPDPVYYSNRAACHNALAQWEQVVADTTAALKLDPHYVKALNRRANAYDQLSRYSDALLDFTASCIIDGFRNEQSAQAVERLLKKFAENKAKEILETKPPKLPSSTFVGNYLQSFRSKPRPEGLEDSVELSEETGLGQLQLGLKHLESKTGTGYEEGSAAFKKALDLGELGPHEALAYNLRGTFHCLMGKHEEALADLSKSIELDPAMTQSYIKRASMNLELGHPDKAEEDFNKAIEQNAEDPDIYYHRAQLHFIKGEFAEAAKDYQKSIDLDSDFIFSHIQLGVTQYKMGSIASSMATFRRCMKNFDQTPDVYNYYGELLLDQNKFQEAIEKFDTAIALEKETKPMCMNVLPLINKALALFQWKQDYAEAEQLCEKALIIDPECDIAVATMAQLLLQQGKVVEALKFFERAAELARTEGELVNALSYAEATRTQIQVQENYPELASKLQGMSGGPGMR</sequence>
<proteinExistence type="evidence at transcript level"/>
<feature type="chain" id="PRO_0000106338" description="Mitochondrial import receptor subunit tom70">
    <location>
        <begin position="1"/>
        <end position="624"/>
    </location>
</feature>
<feature type="topological domain" description="Mitochondrial intermembrane" evidence="1">
    <location>
        <begin position="1"/>
        <end position="38"/>
    </location>
</feature>
<feature type="transmembrane region" description="Helical" evidence="1">
    <location>
        <begin position="39"/>
        <end position="60"/>
    </location>
</feature>
<feature type="topological domain" description="Cytoplasmic" evidence="1">
    <location>
        <begin position="61"/>
        <end position="624"/>
    </location>
</feature>
<feature type="repeat" description="TPR 1">
    <location>
        <begin position="136"/>
        <end position="169"/>
    </location>
</feature>
<feature type="repeat" description="TPR 2">
    <location>
        <begin position="171"/>
        <end position="202"/>
    </location>
</feature>
<feature type="repeat" description="TPR 3">
    <location>
        <begin position="204"/>
        <end position="236"/>
    </location>
</feature>
<feature type="repeat" description="TPR 4">
    <location>
        <begin position="302"/>
        <end position="336"/>
    </location>
</feature>
<feature type="repeat" description="TPR 5">
    <location>
        <begin position="340"/>
        <end position="373"/>
    </location>
</feature>
<feature type="repeat" description="TPR 6">
    <location>
        <begin position="375"/>
        <end position="407"/>
    </location>
</feature>
<feature type="repeat" description="TPR 7">
    <location>
        <begin position="408"/>
        <end position="441"/>
    </location>
</feature>
<feature type="repeat" description="TPR 8">
    <location>
        <begin position="443"/>
        <end position="475"/>
    </location>
</feature>
<feature type="repeat" description="TPR 9">
    <location>
        <begin position="476"/>
        <end position="509"/>
    </location>
</feature>
<feature type="repeat" description="TPR 10">
    <location>
        <begin position="517"/>
        <end position="550"/>
    </location>
</feature>
<feature type="repeat" description="TPR 11">
    <location>
        <begin position="551"/>
        <end position="584"/>
    </location>
</feature>
<feature type="region of interest" description="Disordered" evidence="2">
    <location>
        <begin position="67"/>
        <end position="125"/>
    </location>
</feature>
<feature type="compositionally biased region" description="Basic residues" evidence="2">
    <location>
        <begin position="73"/>
        <end position="83"/>
    </location>
</feature>
<feature type="compositionally biased region" description="Basic and acidic residues" evidence="2">
    <location>
        <begin position="84"/>
        <end position="99"/>
    </location>
</feature>
<feature type="compositionally biased region" description="Acidic residues" evidence="2">
    <location>
        <begin position="112"/>
        <end position="122"/>
    </location>
</feature>
<feature type="sequence conflict" description="In Ref. 1; CAA37767." evidence="3" ref="1">
    <location>
        <begin position="84"/>
        <end position="88"/>
    </location>
</feature>
<feature type="sequence conflict" description="In Ref. 1; CAA37767 and 2; AAD21979." evidence="3" ref="1 2">
    <original>SD</original>
    <variation>RH</variation>
    <location>
        <begin position="220"/>
        <end position="221"/>
    </location>
</feature>
<protein>
    <recommendedName>
        <fullName>Mitochondrial import receptor subunit tom70</fullName>
    </recommendedName>
    <alternativeName>
        <fullName>72 kDa mitochondrial outer membrane protein</fullName>
    </alternativeName>
    <alternativeName>
        <fullName>Mitochondrial import receptor for the ADP/ATP carrier</fullName>
    </alternativeName>
    <alternativeName>
        <fullName>Mitochondrial precursor proteins import receptor</fullName>
    </alternativeName>
    <alternativeName>
        <fullName>Translocase of outer membrane tom70</fullName>
    </alternativeName>
</protein>
<comment type="function">
    <text>Receptor that accelerates the import of all mitochondrial precursor proteins. Seems to act in conjunction with mom19.</text>
</comment>
<comment type="subunit">
    <text>Forms part of the preprotein translocase complex of the outer mitochondrial membrane (TOM complex) which consists of at least 8 different proteins (tom5, tom6, tom7, tom20, tom22, tom37, tom40 and tom70).</text>
</comment>
<comment type="subcellular location">
    <subcellularLocation>
        <location>Mitochondrion outer membrane</location>
        <topology>Single-pass membrane protein</topology>
    </subcellularLocation>
</comment>
<comment type="similarity">
    <text evidence="3">Belongs to the Tom70 family.</text>
</comment>
<name>TOM70_NEUCR</name>
<keyword id="KW-0472">Membrane</keyword>
<keyword id="KW-0496">Mitochondrion</keyword>
<keyword id="KW-1000">Mitochondrion outer membrane</keyword>
<keyword id="KW-0675">Receptor</keyword>
<keyword id="KW-1185">Reference proteome</keyword>
<keyword id="KW-0677">Repeat</keyword>
<keyword id="KW-0802">TPR repeat</keyword>
<keyword id="KW-0812">Transmembrane</keyword>
<keyword id="KW-1133">Transmembrane helix</keyword>
<organism>
    <name type="scientific">Neurospora crassa (strain ATCC 24698 / 74-OR23-1A / CBS 708.71 / DSM 1257 / FGSC 987)</name>
    <dbReference type="NCBI Taxonomy" id="367110"/>
    <lineage>
        <taxon>Eukaryota</taxon>
        <taxon>Fungi</taxon>
        <taxon>Dikarya</taxon>
        <taxon>Ascomycota</taxon>
        <taxon>Pezizomycotina</taxon>
        <taxon>Sordariomycetes</taxon>
        <taxon>Sordariomycetidae</taxon>
        <taxon>Sordariales</taxon>
        <taxon>Sordariaceae</taxon>
        <taxon>Neurospora</taxon>
    </lineage>
</organism>
<dbReference type="EMBL" id="X53735">
    <property type="protein sequence ID" value="CAA37767.1"/>
    <property type="molecule type" value="mRNA"/>
</dbReference>
<dbReference type="EMBL" id="AF110494">
    <property type="protein sequence ID" value="AAD21979.1"/>
    <property type="molecule type" value="Genomic_DNA"/>
</dbReference>
<dbReference type="EMBL" id="AL451022">
    <property type="protein sequence ID" value="CAC18318.1"/>
    <property type="molecule type" value="Genomic_DNA"/>
</dbReference>
<dbReference type="EMBL" id="CM002240">
    <property type="protein sequence ID" value="EAA32000.1"/>
    <property type="molecule type" value="Genomic_DNA"/>
</dbReference>
<dbReference type="PIR" id="A36682">
    <property type="entry name" value="A36682"/>
</dbReference>
<dbReference type="RefSeq" id="XP_961236.1">
    <property type="nucleotide sequence ID" value="XM_956143.2"/>
</dbReference>
<dbReference type="SMR" id="P23231"/>
<dbReference type="FunCoup" id="P23231">
    <property type="interactions" value="763"/>
</dbReference>
<dbReference type="STRING" id="367110.P23231"/>
<dbReference type="PaxDb" id="5141-EFNCRP00000003858"/>
<dbReference type="EnsemblFungi" id="EAA32000">
    <property type="protein sequence ID" value="EAA32000"/>
    <property type="gene ID" value="NCU04245"/>
</dbReference>
<dbReference type="GeneID" id="3877399"/>
<dbReference type="KEGG" id="ncr:NCU04245"/>
<dbReference type="VEuPathDB" id="FungiDB:NCU04245"/>
<dbReference type="HOGENOM" id="CLU_017516_0_1_1"/>
<dbReference type="InParanoid" id="P23231"/>
<dbReference type="OMA" id="QWRGDIE"/>
<dbReference type="OrthoDB" id="2942533at2759"/>
<dbReference type="Proteomes" id="UP000001805">
    <property type="component" value="Chromosome 2, Linkage Group V"/>
</dbReference>
<dbReference type="GO" id="GO:0005741">
    <property type="term" value="C:mitochondrial outer membrane"/>
    <property type="evidence" value="ECO:0000318"/>
    <property type="project" value="GO_Central"/>
</dbReference>
<dbReference type="GO" id="GO:0030943">
    <property type="term" value="F:mitochondrion targeting sequence binding"/>
    <property type="evidence" value="ECO:0000318"/>
    <property type="project" value="GO_Central"/>
</dbReference>
<dbReference type="GO" id="GO:0015450">
    <property type="term" value="F:protein-transporting ATPase activity"/>
    <property type="evidence" value="ECO:0007669"/>
    <property type="project" value="InterPro"/>
</dbReference>
<dbReference type="GO" id="GO:0030150">
    <property type="term" value="P:protein import into mitochondrial matrix"/>
    <property type="evidence" value="ECO:0000318"/>
    <property type="project" value="GO_Central"/>
</dbReference>
<dbReference type="GO" id="GO:0045039">
    <property type="term" value="P:protein insertion into mitochondrial inner membrane"/>
    <property type="evidence" value="ECO:0000318"/>
    <property type="project" value="GO_Central"/>
</dbReference>
<dbReference type="Gene3D" id="1.25.40.10">
    <property type="entry name" value="Tetratricopeptide repeat domain"/>
    <property type="match status" value="2"/>
</dbReference>
<dbReference type="InterPro" id="IPR005687">
    <property type="entry name" value="Tom70"/>
</dbReference>
<dbReference type="InterPro" id="IPR011990">
    <property type="entry name" value="TPR-like_helical_dom_sf"/>
</dbReference>
<dbReference type="InterPro" id="IPR019734">
    <property type="entry name" value="TPR_rpt"/>
</dbReference>
<dbReference type="NCBIfam" id="TIGR00990">
    <property type="entry name" value="3a0801s09"/>
    <property type="match status" value="1"/>
</dbReference>
<dbReference type="PANTHER" id="PTHR46208">
    <property type="entry name" value="MITOCHONDRIAL IMPORT RECEPTOR SUBUNIT TOM70"/>
    <property type="match status" value="1"/>
</dbReference>
<dbReference type="PANTHER" id="PTHR46208:SF1">
    <property type="entry name" value="MITOCHONDRIAL IMPORT RECEPTOR SUBUNIT TOM70"/>
    <property type="match status" value="1"/>
</dbReference>
<dbReference type="Pfam" id="PF13432">
    <property type="entry name" value="TPR_16"/>
    <property type="match status" value="2"/>
</dbReference>
<dbReference type="Pfam" id="PF14559">
    <property type="entry name" value="TPR_19"/>
    <property type="match status" value="1"/>
</dbReference>
<dbReference type="Pfam" id="PF13181">
    <property type="entry name" value="TPR_8"/>
    <property type="match status" value="1"/>
</dbReference>
<dbReference type="SMART" id="SM00028">
    <property type="entry name" value="TPR"/>
    <property type="match status" value="10"/>
</dbReference>
<dbReference type="SUPFAM" id="SSF48452">
    <property type="entry name" value="TPR-like"/>
    <property type="match status" value="1"/>
</dbReference>
<dbReference type="PROSITE" id="PS50005">
    <property type="entry name" value="TPR"/>
    <property type="match status" value="6"/>
</dbReference>
<dbReference type="PROSITE" id="PS50293">
    <property type="entry name" value="TPR_REGION"/>
    <property type="match status" value="3"/>
</dbReference>
<accession>P23231</accession>
<accession>Q9HEG7</accession>
<accession>Q9UWF1</accession>
<gene>
    <name type="primary">tom70</name>
    <name type="synonym">mom72</name>
    <name type="ORF">2E4.170</name>
    <name type="ORF">NCU04245</name>
</gene>